<feature type="signal peptide" evidence="5">
    <location>
        <begin position="1"/>
        <end position="16"/>
    </location>
</feature>
<feature type="chain" id="PRO_0000418557" description="Acidic phospholipase A2 Cvv-E6e">
    <location>
        <begin position="17"/>
        <end position="138"/>
    </location>
</feature>
<feature type="active site" evidence="2">
    <location>
        <position position="63"/>
    </location>
</feature>
<feature type="active site" evidence="2">
    <location>
        <position position="105"/>
    </location>
</feature>
<feature type="binding site" evidence="1">
    <location>
        <position position="43"/>
    </location>
    <ligand>
        <name>Ca(2+)</name>
        <dbReference type="ChEBI" id="CHEBI:29108"/>
    </ligand>
</feature>
<feature type="binding site" evidence="1">
    <location>
        <position position="45"/>
    </location>
    <ligand>
        <name>Ca(2+)</name>
        <dbReference type="ChEBI" id="CHEBI:29108"/>
    </ligand>
</feature>
<feature type="binding site" evidence="1">
    <location>
        <position position="47"/>
    </location>
    <ligand>
        <name>Ca(2+)</name>
        <dbReference type="ChEBI" id="CHEBI:29108"/>
    </ligand>
</feature>
<feature type="binding site" evidence="1">
    <location>
        <position position="64"/>
    </location>
    <ligand>
        <name>Ca(2+)</name>
        <dbReference type="ChEBI" id="CHEBI:29108"/>
    </ligand>
</feature>
<feature type="disulfide bond" evidence="1">
    <location>
        <begin position="42"/>
        <end position="131"/>
    </location>
</feature>
<feature type="disulfide bond" evidence="1">
    <location>
        <begin position="44"/>
        <end position="60"/>
    </location>
</feature>
<feature type="disulfide bond" evidence="1">
    <location>
        <begin position="59"/>
        <end position="111"/>
    </location>
</feature>
<feature type="disulfide bond" evidence="1">
    <location>
        <begin position="65"/>
        <end position="138"/>
    </location>
</feature>
<feature type="disulfide bond" evidence="1">
    <location>
        <begin position="66"/>
        <end position="104"/>
    </location>
</feature>
<feature type="disulfide bond" evidence="1">
    <location>
        <begin position="73"/>
        <end position="97"/>
    </location>
</feature>
<feature type="disulfide bond" evidence="1">
    <location>
        <begin position="91"/>
        <end position="102"/>
    </location>
</feature>
<reference key="1">
    <citation type="journal article" date="2003" name="Arch. Biochem. Biophys.">
        <title>Geographic variations, cloning, and functional analyses of the venom acidic phospholipases A2 of Crotalus viridis viridis.</title>
        <authorList>
            <person name="Tsai I.-H."/>
            <person name="Wang Y.-M."/>
            <person name="Chen Y.-H."/>
            <person name="Tu A.T."/>
        </authorList>
    </citation>
    <scope>NUCLEOTIDE SEQUENCE [MRNA]</scope>
    <scope>PROTEIN SEQUENCE OF 17-39</scope>
    <scope>FUNCTION</scope>
    <scope>COFACTOR</scope>
    <scope>MASS SPECTROMETRY</scope>
    <source>
        <strain>New Mexico</strain>
        <strain>Southeastern Arizona</strain>
        <strain>Texas</strain>
        <strain>Western Oklahoma</strain>
        <tissue>Venom</tissue>
        <tissue>Venom gland</tissue>
    </source>
</reference>
<keyword id="KW-0106">Calcium</keyword>
<keyword id="KW-0903">Direct protein sequencing</keyword>
<keyword id="KW-1015">Disulfide bond</keyword>
<keyword id="KW-1199">Hemostasis impairing toxin</keyword>
<keyword id="KW-0378">Hydrolase</keyword>
<keyword id="KW-0442">Lipid degradation</keyword>
<keyword id="KW-0443">Lipid metabolism</keyword>
<keyword id="KW-0479">Metal-binding</keyword>
<keyword id="KW-1201">Platelet aggregation inhibiting toxin</keyword>
<keyword id="KW-0964">Secreted</keyword>
<keyword id="KW-0732">Signal</keyword>
<keyword id="KW-0800">Toxin</keyword>
<name>PA2AE_CROVV</name>
<organism>
    <name type="scientific">Crotalus viridis viridis</name>
    <name type="common">Prairie rattlesnake</name>
    <dbReference type="NCBI Taxonomy" id="8742"/>
    <lineage>
        <taxon>Eukaryota</taxon>
        <taxon>Metazoa</taxon>
        <taxon>Chordata</taxon>
        <taxon>Craniata</taxon>
        <taxon>Vertebrata</taxon>
        <taxon>Euteleostomi</taxon>
        <taxon>Lepidosauria</taxon>
        <taxon>Squamata</taxon>
        <taxon>Bifurcata</taxon>
        <taxon>Unidentata</taxon>
        <taxon>Episquamata</taxon>
        <taxon>Toxicofera</taxon>
        <taxon>Serpentes</taxon>
        <taxon>Colubroidea</taxon>
        <taxon>Viperidae</taxon>
        <taxon>Crotalinae</taxon>
        <taxon>Crotalus</taxon>
    </lineage>
</organism>
<accession>Q7ZTA8</accession>
<dbReference type="EC" id="3.1.1.4"/>
<dbReference type="EMBL" id="AY120875">
    <property type="protein sequence ID" value="AAM80563.1"/>
    <property type="molecule type" value="mRNA"/>
</dbReference>
<dbReference type="SMR" id="Q7ZTA8"/>
<dbReference type="GO" id="GO:0005576">
    <property type="term" value="C:extracellular region"/>
    <property type="evidence" value="ECO:0007669"/>
    <property type="project" value="UniProtKB-SubCell"/>
</dbReference>
<dbReference type="GO" id="GO:0005509">
    <property type="term" value="F:calcium ion binding"/>
    <property type="evidence" value="ECO:0007669"/>
    <property type="project" value="InterPro"/>
</dbReference>
<dbReference type="GO" id="GO:0047498">
    <property type="term" value="F:calcium-dependent phospholipase A2 activity"/>
    <property type="evidence" value="ECO:0007669"/>
    <property type="project" value="TreeGrafter"/>
</dbReference>
<dbReference type="GO" id="GO:0005543">
    <property type="term" value="F:phospholipid binding"/>
    <property type="evidence" value="ECO:0007669"/>
    <property type="project" value="TreeGrafter"/>
</dbReference>
<dbReference type="GO" id="GO:0090729">
    <property type="term" value="F:toxin activity"/>
    <property type="evidence" value="ECO:0007669"/>
    <property type="project" value="UniProtKB-KW"/>
</dbReference>
<dbReference type="GO" id="GO:0050482">
    <property type="term" value="P:arachidonate secretion"/>
    <property type="evidence" value="ECO:0007669"/>
    <property type="project" value="InterPro"/>
</dbReference>
<dbReference type="GO" id="GO:0016042">
    <property type="term" value="P:lipid catabolic process"/>
    <property type="evidence" value="ECO:0007669"/>
    <property type="project" value="UniProtKB-KW"/>
</dbReference>
<dbReference type="GO" id="GO:0042130">
    <property type="term" value="P:negative regulation of T cell proliferation"/>
    <property type="evidence" value="ECO:0007669"/>
    <property type="project" value="TreeGrafter"/>
</dbReference>
<dbReference type="GO" id="GO:0006644">
    <property type="term" value="P:phospholipid metabolic process"/>
    <property type="evidence" value="ECO:0007669"/>
    <property type="project" value="InterPro"/>
</dbReference>
<dbReference type="CDD" id="cd00125">
    <property type="entry name" value="PLA2c"/>
    <property type="match status" value="1"/>
</dbReference>
<dbReference type="FunFam" id="1.20.90.10:FF:000001">
    <property type="entry name" value="Basic phospholipase A2 homolog"/>
    <property type="match status" value="1"/>
</dbReference>
<dbReference type="Gene3D" id="1.20.90.10">
    <property type="entry name" value="Phospholipase A2 domain"/>
    <property type="match status" value="1"/>
</dbReference>
<dbReference type="InterPro" id="IPR001211">
    <property type="entry name" value="PLipase_A2"/>
</dbReference>
<dbReference type="InterPro" id="IPR033112">
    <property type="entry name" value="PLipase_A2_Asp_AS"/>
</dbReference>
<dbReference type="InterPro" id="IPR016090">
    <property type="entry name" value="PLipase_A2_dom"/>
</dbReference>
<dbReference type="InterPro" id="IPR036444">
    <property type="entry name" value="PLipase_A2_dom_sf"/>
</dbReference>
<dbReference type="InterPro" id="IPR033113">
    <property type="entry name" value="PLipase_A2_His_AS"/>
</dbReference>
<dbReference type="PANTHER" id="PTHR11716">
    <property type="entry name" value="PHOSPHOLIPASE A2 FAMILY MEMBER"/>
    <property type="match status" value="1"/>
</dbReference>
<dbReference type="PANTHER" id="PTHR11716:SF9">
    <property type="entry name" value="PHOSPHOLIPASE A2, MEMBRANE ASSOCIATED"/>
    <property type="match status" value="1"/>
</dbReference>
<dbReference type="Pfam" id="PF00068">
    <property type="entry name" value="Phospholip_A2_1"/>
    <property type="match status" value="1"/>
</dbReference>
<dbReference type="PRINTS" id="PR00389">
    <property type="entry name" value="PHPHLIPASEA2"/>
</dbReference>
<dbReference type="SMART" id="SM00085">
    <property type="entry name" value="PA2c"/>
    <property type="match status" value="1"/>
</dbReference>
<dbReference type="SUPFAM" id="SSF48619">
    <property type="entry name" value="Phospholipase A2, PLA2"/>
    <property type="match status" value="1"/>
</dbReference>
<dbReference type="PROSITE" id="PS00119">
    <property type="entry name" value="PA2_ASP"/>
    <property type="match status" value="1"/>
</dbReference>
<dbReference type="PROSITE" id="PS00118">
    <property type="entry name" value="PA2_HIS"/>
    <property type="match status" value="1"/>
</dbReference>
<comment type="function">
    <text evidence="5">Snake venom phospholipase A2 (PLA2) that significantly inhibits ADP-induced platelet aggregation in platelet-rich plasma of human, rabbit and guinea pig. PLA2 catalyzes the calcium-dependent hydrolysis of the 2-acyl groups in 3-sn-phosphoglycerides.</text>
</comment>
<comment type="catalytic activity">
    <reaction evidence="3 4">
        <text>a 1,2-diacyl-sn-glycero-3-phosphocholine + H2O = a 1-acyl-sn-glycero-3-phosphocholine + a fatty acid + H(+)</text>
        <dbReference type="Rhea" id="RHEA:15801"/>
        <dbReference type="ChEBI" id="CHEBI:15377"/>
        <dbReference type="ChEBI" id="CHEBI:15378"/>
        <dbReference type="ChEBI" id="CHEBI:28868"/>
        <dbReference type="ChEBI" id="CHEBI:57643"/>
        <dbReference type="ChEBI" id="CHEBI:58168"/>
        <dbReference type="EC" id="3.1.1.4"/>
    </reaction>
</comment>
<comment type="cofactor">
    <cofactor evidence="5">
        <name>Ca(2+)</name>
        <dbReference type="ChEBI" id="CHEBI:29108"/>
    </cofactor>
</comment>
<comment type="subcellular location">
    <subcellularLocation>
        <location>Secreted</location>
    </subcellularLocation>
</comment>
<comment type="tissue specificity">
    <text>Expressed by the venom gland.</text>
</comment>
<comment type="mass spectrometry"/>
<comment type="similarity">
    <text evidence="6">Belongs to the phospholipase A2 family. Group II subfamily. D49 sub-subfamily.</text>
</comment>
<protein>
    <recommendedName>
        <fullName>Acidic phospholipase A2 Cvv-E6e</fullName>
        <shortName>svPLA2</shortName>
        <ecNumber>3.1.1.4</ecNumber>
    </recommendedName>
    <alternativeName>
        <fullName>Phosphatidylcholine 2-acylhydrolase</fullName>
    </alternativeName>
</protein>
<evidence type="ECO:0000250" key="1">
    <source>
        <dbReference type="UniProtKB" id="O42187"/>
    </source>
</evidence>
<evidence type="ECO:0000250" key="2">
    <source>
        <dbReference type="UniProtKB" id="P06859"/>
    </source>
</evidence>
<evidence type="ECO:0000255" key="3">
    <source>
        <dbReference type="PROSITE-ProRule" id="PRU10035"/>
    </source>
</evidence>
<evidence type="ECO:0000255" key="4">
    <source>
        <dbReference type="PROSITE-ProRule" id="PRU10036"/>
    </source>
</evidence>
<evidence type="ECO:0000269" key="5">
    <source>
    </source>
</evidence>
<evidence type="ECO:0000305" key="6"/>
<sequence>MRTLWILAVLLLGVEGNLVQFELLIMKVAKRSGLLSYSAYGCYCGWGGHGRPQDATDRCCFVHDCCYGKVTDCNPKTASYTYSEENGEIVCGGDDPCKKQVCECDRVAAICFRDNIPSYDNKYIQFPAKNCQEKPEPC</sequence>
<proteinExistence type="evidence at protein level"/>